<accession>A9VKV6</accession>
<protein>
    <recommendedName>
        <fullName evidence="1">D-alanine--D-alanyl carrier protein ligase</fullName>
        <shortName evidence="1">DCL</shortName>
        <ecNumber evidence="1">6.2.1.54</ecNumber>
    </recommendedName>
    <alternativeName>
        <fullName evidence="1">D-alanine--poly(phosphoribitol) ligase subunit 1</fullName>
    </alternativeName>
    <alternativeName>
        <fullName evidence="1">D-alanine-activating enzyme</fullName>
        <shortName evidence="1">DAE</shortName>
    </alternativeName>
</protein>
<gene>
    <name evidence="1" type="primary">dltA</name>
    <name type="ordered locus">BcerKBAB4_1294</name>
</gene>
<name>DLTA_BACMK</name>
<organism>
    <name type="scientific">Bacillus mycoides (strain KBAB4)</name>
    <name type="common">Bacillus weihenstephanensis</name>
    <dbReference type="NCBI Taxonomy" id="315730"/>
    <lineage>
        <taxon>Bacteria</taxon>
        <taxon>Bacillati</taxon>
        <taxon>Bacillota</taxon>
        <taxon>Bacilli</taxon>
        <taxon>Bacillales</taxon>
        <taxon>Bacillaceae</taxon>
        <taxon>Bacillus</taxon>
        <taxon>Bacillus cereus group</taxon>
    </lineage>
</organism>
<comment type="function">
    <text evidence="1">Catalyzes the first step in the D-alanylation of lipoteichoic acid (LTA), the activation of D-alanine and its transfer onto the D-alanyl carrier protein (Dcp) DltC. In an ATP-dependent two-step reaction, forms a high energy D-alanyl-AMP intermediate, followed by transfer of the D-alanyl residue as a thiol ester to the phosphopantheinyl prosthetic group of the Dcp. D-alanylation of LTA plays an important role in modulating the properties of the cell wall in Gram-positive bacteria, influencing the net charge of the cell wall.</text>
</comment>
<comment type="catalytic activity">
    <reaction evidence="1">
        <text>holo-[D-alanyl-carrier protein] + D-alanine + ATP = D-alanyl-[D-alanyl-carrier protein] + AMP + diphosphate</text>
        <dbReference type="Rhea" id="RHEA:55132"/>
        <dbReference type="Rhea" id="RHEA-COMP:14102"/>
        <dbReference type="Rhea" id="RHEA-COMP:14103"/>
        <dbReference type="ChEBI" id="CHEBI:30616"/>
        <dbReference type="ChEBI" id="CHEBI:33019"/>
        <dbReference type="ChEBI" id="CHEBI:57416"/>
        <dbReference type="ChEBI" id="CHEBI:64479"/>
        <dbReference type="ChEBI" id="CHEBI:138620"/>
        <dbReference type="ChEBI" id="CHEBI:456215"/>
        <dbReference type="EC" id="6.2.1.54"/>
    </reaction>
</comment>
<comment type="pathway">
    <text evidence="1">Cell wall biogenesis; lipoteichoic acid biosynthesis.</text>
</comment>
<comment type="subcellular location">
    <subcellularLocation>
        <location evidence="1">Cytoplasm</location>
    </subcellularLocation>
</comment>
<comment type="similarity">
    <text evidence="1">Belongs to the ATP-dependent AMP-binding enzyme family. DltA subfamily.</text>
</comment>
<proteinExistence type="inferred from homology"/>
<feature type="chain" id="PRO_1000129821" description="D-alanine--D-alanyl carrier protein ligase">
    <location>
        <begin position="1"/>
        <end position="504"/>
    </location>
</feature>
<feature type="binding site" evidence="1">
    <location>
        <begin position="152"/>
        <end position="153"/>
    </location>
    <ligand>
        <name>ATP</name>
        <dbReference type="ChEBI" id="CHEBI:30616"/>
    </ligand>
</feature>
<feature type="binding site" evidence="1">
    <location>
        <position position="197"/>
    </location>
    <ligand>
        <name>D-alanine</name>
        <dbReference type="ChEBI" id="CHEBI:57416"/>
    </ligand>
</feature>
<feature type="binding site" evidence="1">
    <location>
        <begin position="292"/>
        <end position="297"/>
    </location>
    <ligand>
        <name>ATP</name>
        <dbReference type="ChEBI" id="CHEBI:30616"/>
    </ligand>
</feature>
<feature type="binding site" evidence="1">
    <location>
        <position position="301"/>
    </location>
    <ligand>
        <name>D-alanine</name>
        <dbReference type="ChEBI" id="CHEBI:57416"/>
    </ligand>
</feature>
<feature type="binding site" evidence="1">
    <location>
        <position position="383"/>
    </location>
    <ligand>
        <name>ATP</name>
        <dbReference type="ChEBI" id="CHEBI:30616"/>
    </ligand>
</feature>
<feature type="binding site" evidence="1">
    <location>
        <begin position="394"/>
        <end position="397"/>
    </location>
    <ligand>
        <name>ATP</name>
        <dbReference type="ChEBI" id="CHEBI:30616"/>
    </ligand>
</feature>
<feature type="binding site" evidence="1">
    <location>
        <position position="492"/>
    </location>
    <ligand>
        <name>ATP</name>
        <dbReference type="ChEBI" id="CHEBI:30616"/>
    </ligand>
</feature>
<feature type="binding site" evidence="1">
    <location>
        <position position="492"/>
    </location>
    <ligand>
        <name>D-alanine</name>
        <dbReference type="ChEBI" id="CHEBI:57416"/>
    </ligand>
</feature>
<reference key="1">
    <citation type="journal article" date="2008" name="Chem. Biol. Interact.">
        <title>Extending the Bacillus cereus group genomics to putative food-borne pathogens of different toxicity.</title>
        <authorList>
            <person name="Lapidus A."/>
            <person name="Goltsman E."/>
            <person name="Auger S."/>
            <person name="Galleron N."/>
            <person name="Segurens B."/>
            <person name="Dossat C."/>
            <person name="Land M.L."/>
            <person name="Broussolle V."/>
            <person name="Brillard J."/>
            <person name="Guinebretiere M.-H."/>
            <person name="Sanchis V."/>
            <person name="Nguen-the C."/>
            <person name="Lereclus D."/>
            <person name="Richardson P."/>
            <person name="Wincker P."/>
            <person name="Weissenbach J."/>
            <person name="Ehrlich S.D."/>
            <person name="Sorokin A."/>
        </authorList>
    </citation>
    <scope>NUCLEOTIDE SEQUENCE [LARGE SCALE GENOMIC DNA]</scope>
    <source>
        <strain>KBAB4</strain>
    </source>
</reference>
<evidence type="ECO:0000255" key="1">
    <source>
        <dbReference type="HAMAP-Rule" id="MF_00593"/>
    </source>
</evidence>
<sequence length="504" mass="56534">MKLLEQIEKWAVETPDQTAFVWRDAKITYKQLKEDSDALAHWISSEYPDDRSPIMVYGHMQPEMIINFLGCVKAGHAYIPVDLSIPADRVQRIAESSGAKLLLSGAEVTVTDLPVRITSEDNLKDIFFTHKGNTPNPEHAVKGDENFYIIYTSGSTGNPKGVQITYNCLVSFTKWTVEDFNLQTGQVFLNQAPFSFDLSVMDIYPSLVTGGTLWAIDKDMIARPKDLFASLEQSDIQVWTSTPSFAEMCLMEASFSESMLPNMKTFLFCGEVLPNEVARKLIERFPKAAIMNTYGPTEATVAVTGIHVTEEVLDQYKSLPVGYCKSDCRLLIMKEDGTIAPDGEKGEIVIVGPSVSVGYLGSPELTEKVFTMIDGERAYKTGDAGYVENGLLFYNGRLDFQIKLHGYRMELEEIEHHLRACSYVEGAVVVPIKKGEKYDYLLAVVVPGEHSFEKEFKLTSAIKKELNERLPNYMIPRKFMYHSSIPMTPNGKVDRKKLLSEVTA</sequence>
<keyword id="KW-0067">ATP-binding</keyword>
<keyword id="KW-0963">Cytoplasm</keyword>
<keyword id="KW-0436">Ligase</keyword>
<keyword id="KW-0547">Nucleotide-binding</keyword>
<dbReference type="EC" id="6.2.1.54" evidence="1"/>
<dbReference type="EMBL" id="CP000903">
    <property type="protein sequence ID" value="ABY42541.1"/>
    <property type="molecule type" value="Genomic_DNA"/>
</dbReference>
<dbReference type="RefSeq" id="WP_012260604.1">
    <property type="nucleotide sequence ID" value="NC_010184.1"/>
</dbReference>
<dbReference type="SMR" id="A9VKV6"/>
<dbReference type="KEGG" id="bwe:BcerKBAB4_1294"/>
<dbReference type="eggNOG" id="COG1020">
    <property type="taxonomic scope" value="Bacteria"/>
</dbReference>
<dbReference type="HOGENOM" id="CLU_000022_2_12_9"/>
<dbReference type="UniPathway" id="UPA00556"/>
<dbReference type="Proteomes" id="UP000002154">
    <property type="component" value="Chromosome"/>
</dbReference>
<dbReference type="GO" id="GO:0005737">
    <property type="term" value="C:cytoplasm"/>
    <property type="evidence" value="ECO:0007669"/>
    <property type="project" value="UniProtKB-SubCell"/>
</dbReference>
<dbReference type="GO" id="GO:0005524">
    <property type="term" value="F:ATP binding"/>
    <property type="evidence" value="ECO:0007669"/>
    <property type="project" value="UniProtKB-KW"/>
</dbReference>
<dbReference type="GO" id="GO:0047473">
    <property type="term" value="F:D-alanine [D-alanyl carrier protein] ligase activity"/>
    <property type="evidence" value="ECO:0007669"/>
    <property type="project" value="UniProtKB-UniRule"/>
</dbReference>
<dbReference type="GO" id="GO:0070395">
    <property type="term" value="P:lipoteichoic acid biosynthetic process"/>
    <property type="evidence" value="ECO:0007669"/>
    <property type="project" value="UniProtKB-UniRule"/>
</dbReference>
<dbReference type="CDD" id="cd05945">
    <property type="entry name" value="DltA"/>
    <property type="match status" value="1"/>
</dbReference>
<dbReference type="FunFam" id="3.30.300.30:FF:000012">
    <property type="entry name" value="D-alanine--D-alanyl carrier protein ligase"/>
    <property type="match status" value="1"/>
</dbReference>
<dbReference type="FunFam" id="3.40.50.12780:FF:000015">
    <property type="entry name" value="D-alanine--D-alanyl carrier protein ligase"/>
    <property type="match status" value="1"/>
</dbReference>
<dbReference type="Gene3D" id="3.30.300.30">
    <property type="match status" value="1"/>
</dbReference>
<dbReference type="Gene3D" id="3.40.50.12780">
    <property type="entry name" value="N-terminal domain of ligase-like"/>
    <property type="match status" value="1"/>
</dbReference>
<dbReference type="HAMAP" id="MF_00593">
    <property type="entry name" value="DltA"/>
    <property type="match status" value="1"/>
</dbReference>
<dbReference type="InterPro" id="IPR010071">
    <property type="entry name" value="AA_adenyl_dom"/>
</dbReference>
<dbReference type="InterPro" id="IPR025110">
    <property type="entry name" value="AMP-bd_C"/>
</dbReference>
<dbReference type="InterPro" id="IPR045851">
    <property type="entry name" value="AMP-bd_C_sf"/>
</dbReference>
<dbReference type="InterPro" id="IPR020845">
    <property type="entry name" value="AMP-binding_CS"/>
</dbReference>
<dbReference type="InterPro" id="IPR000873">
    <property type="entry name" value="AMP-dep_synth/lig_dom"/>
</dbReference>
<dbReference type="InterPro" id="IPR042099">
    <property type="entry name" value="ANL_N_sf"/>
</dbReference>
<dbReference type="InterPro" id="IPR010072">
    <property type="entry name" value="DltA"/>
</dbReference>
<dbReference type="InterPro" id="IPR044507">
    <property type="entry name" value="DltA-like"/>
</dbReference>
<dbReference type="NCBIfam" id="TIGR01733">
    <property type="entry name" value="AA-adenyl-dom"/>
    <property type="match status" value="1"/>
</dbReference>
<dbReference type="NCBIfam" id="TIGR01734">
    <property type="entry name" value="D-ala-DACP-lig"/>
    <property type="match status" value="1"/>
</dbReference>
<dbReference type="NCBIfam" id="NF003417">
    <property type="entry name" value="PRK04813.1"/>
    <property type="match status" value="1"/>
</dbReference>
<dbReference type="PANTHER" id="PTHR45398">
    <property type="match status" value="1"/>
</dbReference>
<dbReference type="PANTHER" id="PTHR45398:SF1">
    <property type="entry name" value="ENZYME, PUTATIVE (JCVI)-RELATED"/>
    <property type="match status" value="1"/>
</dbReference>
<dbReference type="Pfam" id="PF00501">
    <property type="entry name" value="AMP-binding"/>
    <property type="match status" value="1"/>
</dbReference>
<dbReference type="Pfam" id="PF13193">
    <property type="entry name" value="AMP-binding_C"/>
    <property type="match status" value="1"/>
</dbReference>
<dbReference type="SUPFAM" id="SSF56801">
    <property type="entry name" value="Acetyl-CoA synthetase-like"/>
    <property type="match status" value="1"/>
</dbReference>
<dbReference type="PROSITE" id="PS00455">
    <property type="entry name" value="AMP_BINDING"/>
    <property type="match status" value="1"/>
</dbReference>